<feature type="chain" id="PRO_1000086139" description="Small ribosomal subunit protein uS3">
    <location>
        <begin position="1"/>
        <end position="236"/>
    </location>
</feature>
<feature type="domain" description="KH type-2" evidence="1">
    <location>
        <begin position="39"/>
        <end position="107"/>
    </location>
</feature>
<feature type="region of interest" description="Disordered" evidence="2">
    <location>
        <begin position="214"/>
        <end position="236"/>
    </location>
</feature>
<accession>A6X0C4</accession>
<sequence>MGQKINPIGLRLGINRTWDSRWYANTGEYGKLLHEDVKIREFLTEELKQAAISKIVIERPHKKCRVTIHSARPGIIIGKKGADIEKLRKKLSEMTNADTSLNIVEVRKPEIDATLIAQSIAQQLERRVAFRRAMKRAVQSAMRLGAEGIRINCSGRLGGAEIARMEWYREGRVPLHTLRADIDYGTAEAKTAYGICGVKVWVFKGEILEHDPMASERRAVEGDNQGSSSNRRRENA</sequence>
<protein>
    <recommendedName>
        <fullName evidence="1">Small ribosomal subunit protein uS3</fullName>
    </recommendedName>
    <alternativeName>
        <fullName evidence="3">30S ribosomal protein S3</fullName>
    </alternativeName>
</protein>
<reference key="1">
    <citation type="journal article" date="2011" name="J. Bacteriol.">
        <title>Genome of Ochrobactrum anthropi ATCC 49188 T, a versatile opportunistic pathogen and symbiont of several eukaryotic hosts.</title>
        <authorList>
            <person name="Chain P.S."/>
            <person name="Lang D.M."/>
            <person name="Comerci D.J."/>
            <person name="Malfatti S.A."/>
            <person name="Vergez L.M."/>
            <person name="Shin M."/>
            <person name="Ugalde R.A."/>
            <person name="Garcia E."/>
            <person name="Tolmasky M.E."/>
        </authorList>
    </citation>
    <scope>NUCLEOTIDE SEQUENCE [LARGE SCALE GENOMIC DNA]</scope>
    <source>
        <strain>ATCC 49188 / DSM 6882 / CCUG 24695 / JCM 21032 / LMG 3331 / NBRC 15819 / NCTC 12168 / Alc 37</strain>
    </source>
</reference>
<comment type="function">
    <text evidence="1">Binds the lower part of the 30S subunit head. Binds mRNA in the 70S ribosome, positioning it for translation.</text>
</comment>
<comment type="subunit">
    <text evidence="1">Part of the 30S ribosomal subunit. Forms a tight complex with proteins S10 and S14.</text>
</comment>
<comment type="similarity">
    <text evidence="1">Belongs to the universal ribosomal protein uS3 family.</text>
</comment>
<proteinExistence type="inferred from homology"/>
<keyword id="KW-1185">Reference proteome</keyword>
<keyword id="KW-0687">Ribonucleoprotein</keyword>
<keyword id="KW-0689">Ribosomal protein</keyword>
<keyword id="KW-0694">RNA-binding</keyword>
<keyword id="KW-0699">rRNA-binding</keyword>
<gene>
    <name evidence="1" type="primary">rpsC</name>
    <name type="ordered locus">Oant_1962</name>
</gene>
<organism>
    <name type="scientific">Brucella anthropi (strain ATCC 49188 / DSM 6882 / CCUG 24695 / JCM 21032 / LMG 3331 / NBRC 15819 / NCTC 12168 / Alc 37)</name>
    <name type="common">Ochrobactrum anthropi</name>
    <dbReference type="NCBI Taxonomy" id="439375"/>
    <lineage>
        <taxon>Bacteria</taxon>
        <taxon>Pseudomonadati</taxon>
        <taxon>Pseudomonadota</taxon>
        <taxon>Alphaproteobacteria</taxon>
        <taxon>Hyphomicrobiales</taxon>
        <taxon>Brucellaceae</taxon>
        <taxon>Brucella/Ochrobactrum group</taxon>
        <taxon>Brucella</taxon>
    </lineage>
</organism>
<evidence type="ECO:0000255" key="1">
    <source>
        <dbReference type="HAMAP-Rule" id="MF_01309"/>
    </source>
</evidence>
<evidence type="ECO:0000256" key="2">
    <source>
        <dbReference type="SAM" id="MobiDB-lite"/>
    </source>
</evidence>
<evidence type="ECO:0000305" key="3"/>
<dbReference type="EMBL" id="CP000758">
    <property type="protein sequence ID" value="ABS14678.1"/>
    <property type="molecule type" value="Genomic_DNA"/>
</dbReference>
<dbReference type="RefSeq" id="WP_006467024.1">
    <property type="nucleotide sequence ID" value="NC_009667.1"/>
</dbReference>
<dbReference type="SMR" id="A6X0C4"/>
<dbReference type="STRING" id="439375.Oant_1962"/>
<dbReference type="GeneID" id="61317580"/>
<dbReference type="KEGG" id="oan:Oant_1962"/>
<dbReference type="eggNOG" id="COG0092">
    <property type="taxonomic scope" value="Bacteria"/>
</dbReference>
<dbReference type="HOGENOM" id="CLU_058591_0_2_5"/>
<dbReference type="PhylomeDB" id="A6X0C4"/>
<dbReference type="Proteomes" id="UP000002301">
    <property type="component" value="Chromosome 1"/>
</dbReference>
<dbReference type="GO" id="GO:0022627">
    <property type="term" value="C:cytosolic small ribosomal subunit"/>
    <property type="evidence" value="ECO:0007669"/>
    <property type="project" value="TreeGrafter"/>
</dbReference>
<dbReference type="GO" id="GO:0003729">
    <property type="term" value="F:mRNA binding"/>
    <property type="evidence" value="ECO:0007669"/>
    <property type="project" value="UniProtKB-UniRule"/>
</dbReference>
<dbReference type="GO" id="GO:0019843">
    <property type="term" value="F:rRNA binding"/>
    <property type="evidence" value="ECO:0007669"/>
    <property type="project" value="UniProtKB-UniRule"/>
</dbReference>
<dbReference type="GO" id="GO:0003735">
    <property type="term" value="F:structural constituent of ribosome"/>
    <property type="evidence" value="ECO:0007669"/>
    <property type="project" value="InterPro"/>
</dbReference>
<dbReference type="GO" id="GO:0006412">
    <property type="term" value="P:translation"/>
    <property type="evidence" value="ECO:0007669"/>
    <property type="project" value="UniProtKB-UniRule"/>
</dbReference>
<dbReference type="CDD" id="cd02412">
    <property type="entry name" value="KH-II_30S_S3"/>
    <property type="match status" value="1"/>
</dbReference>
<dbReference type="FunFam" id="3.30.1140.32:FF:000009">
    <property type="entry name" value="30S ribosomal protein S3"/>
    <property type="match status" value="1"/>
</dbReference>
<dbReference type="FunFam" id="3.30.300.20:FF:000001">
    <property type="entry name" value="30S ribosomal protein S3"/>
    <property type="match status" value="1"/>
</dbReference>
<dbReference type="Gene3D" id="3.30.300.20">
    <property type="match status" value="1"/>
</dbReference>
<dbReference type="Gene3D" id="3.30.1140.32">
    <property type="entry name" value="Ribosomal protein S3, C-terminal domain"/>
    <property type="match status" value="1"/>
</dbReference>
<dbReference type="HAMAP" id="MF_01309_B">
    <property type="entry name" value="Ribosomal_uS3_B"/>
    <property type="match status" value="1"/>
</dbReference>
<dbReference type="InterPro" id="IPR004087">
    <property type="entry name" value="KH_dom"/>
</dbReference>
<dbReference type="InterPro" id="IPR015946">
    <property type="entry name" value="KH_dom-like_a/b"/>
</dbReference>
<dbReference type="InterPro" id="IPR004044">
    <property type="entry name" value="KH_dom_type_2"/>
</dbReference>
<dbReference type="InterPro" id="IPR009019">
    <property type="entry name" value="KH_sf_prok-type"/>
</dbReference>
<dbReference type="InterPro" id="IPR036419">
    <property type="entry name" value="Ribosomal_S3_C_sf"/>
</dbReference>
<dbReference type="InterPro" id="IPR005704">
    <property type="entry name" value="Ribosomal_uS3_bac-typ"/>
</dbReference>
<dbReference type="InterPro" id="IPR001351">
    <property type="entry name" value="Ribosomal_uS3_C"/>
</dbReference>
<dbReference type="InterPro" id="IPR018280">
    <property type="entry name" value="Ribosomal_uS3_CS"/>
</dbReference>
<dbReference type="NCBIfam" id="TIGR01009">
    <property type="entry name" value="rpsC_bact"/>
    <property type="match status" value="1"/>
</dbReference>
<dbReference type="PANTHER" id="PTHR11760">
    <property type="entry name" value="30S/40S RIBOSOMAL PROTEIN S3"/>
    <property type="match status" value="1"/>
</dbReference>
<dbReference type="PANTHER" id="PTHR11760:SF19">
    <property type="entry name" value="SMALL RIBOSOMAL SUBUNIT PROTEIN US3C"/>
    <property type="match status" value="1"/>
</dbReference>
<dbReference type="Pfam" id="PF07650">
    <property type="entry name" value="KH_2"/>
    <property type="match status" value="1"/>
</dbReference>
<dbReference type="Pfam" id="PF00189">
    <property type="entry name" value="Ribosomal_S3_C"/>
    <property type="match status" value="1"/>
</dbReference>
<dbReference type="SMART" id="SM00322">
    <property type="entry name" value="KH"/>
    <property type="match status" value="1"/>
</dbReference>
<dbReference type="SUPFAM" id="SSF54814">
    <property type="entry name" value="Prokaryotic type KH domain (KH-domain type II)"/>
    <property type="match status" value="1"/>
</dbReference>
<dbReference type="SUPFAM" id="SSF54821">
    <property type="entry name" value="Ribosomal protein S3 C-terminal domain"/>
    <property type="match status" value="1"/>
</dbReference>
<dbReference type="PROSITE" id="PS50823">
    <property type="entry name" value="KH_TYPE_2"/>
    <property type="match status" value="1"/>
</dbReference>
<dbReference type="PROSITE" id="PS00548">
    <property type="entry name" value="RIBOSOMAL_S3"/>
    <property type="match status" value="1"/>
</dbReference>
<name>RS3_BRUA4</name>